<organism>
    <name type="scientific">Pyrobaculum calidifontis (strain DSM 21063 / JCM 11548 / VA1)</name>
    <dbReference type="NCBI Taxonomy" id="410359"/>
    <lineage>
        <taxon>Archaea</taxon>
        <taxon>Thermoproteota</taxon>
        <taxon>Thermoprotei</taxon>
        <taxon>Thermoproteales</taxon>
        <taxon>Thermoproteaceae</taxon>
        <taxon>Pyrobaculum</taxon>
    </lineage>
</organism>
<proteinExistence type="inferred from homology"/>
<protein>
    <recommendedName>
        <fullName evidence="1">Protein Pcal_0062</fullName>
    </recommendedName>
</protein>
<accession>A3MS85</accession>
<reference key="1">
    <citation type="submission" date="2007-02" db="EMBL/GenBank/DDBJ databases">
        <title>Complete sequence of Pyrobaculum calidifontis JCM 11548.</title>
        <authorList>
            <consortium name="US DOE Joint Genome Institute"/>
            <person name="Copeland A."/>
            <person name="Lucas S."/>
            <person name="Lapidus A."/>
            <person name="Barry K."/>
            <person name="Glavina del Rio T."/>
            <person name="Dalin E."/>
            <person name="Tice H."/>
            <person name="Pitluck S."/>
            <person name="Chain P."/>
            <person name="Malfatti S."/>
            <person name="Shin M."/>
            <person name="Vergez L."/>
            <person name="Schmutz J."/>
            <person name="Larimer F."/>
            <person name="Land M."/>
            <person name="Hauser L."/>
            <person name="Kyrpides N."/>
            <person name="Mikhailova N."/>
            <person name="Cozen A.E."/>
            <person name="Fitz-Gibbon S.T."/>
            <person name="House C.H."/>
            <person name="Saltikov C."/>
            <person name="Lowe T.M."/>
            <person name="Richardson P."/>
        </authorList>
    </citation>
    <scope>NUCLEOTIDE SEQUENCE [LARGE SCALE GENOMIC DNA]</scope>
    <source>
        <strain>DSM 21063 / JCM 11548 / VA1</strain>
    </source>
</reference>
<gene>
    <name type="ordered locus">Pcal_0062</name>
</gene>
<comment type="similarity">
    <text evidence="1">Belongs to the CinA family.</text>
</comment>
<dbReference type="EMBL" id="CP000561">
    <property type="protein sequence ID" value="ABO07502.1"/>
    <property type="molecule type" value="Genomic_DNA"/>
</dbReference>
<dbReference type="RefSeq" id="WP_011848759.1">
    <property type="nucleotide sequence ID" value="NC_009073.1"/>
</dbReference>
<dbReference type="SMR" id="A3MS85"/>
<dbReference type="STRING" id="410359.Pcal_0062"/>
<dbReference type="GeneID" id="4909069"/>
<dbReference type="KEGG" id="pcl:Pcal_0062"/>
<dbReference type="eggNOG" id="arCOG00215">
    <property type="taxonomic scope" value="Archaea"/>
</dbReference>
<dbReference type="HOGENOM" id="CLU_030805_0_5_2"/>
<dbReference type="OrthoDB" id="372037at2157"/>
<dbReference type="Proteomes" id="UP000001431">
    <property type="component" value="Chromosome"/>
</dbReference>
<dbReference type="CDD" id="cd00885">
    <property type="entry name" value="cinA"/>
    <property type="match status" value="1"/>
</dbReference>
<dbReference type="Gene3D" id="3.40.980.10">
    <property type="entry name" value="MoaB/Mog-like domain"/>
    <property type="match status" value="1"/>
</dbReference>
<dbReference type="HAMAP" id="MF_00226_A">
    <property type="entry name" value="CinA_A"/>
    <property type="match status" value="1"/>
</dbReference>
<dbReference type="InterPro" id="IPR050101">
    <property type="entry name" value="CinA"/>
</dbReference>
<dbReference type="InterPro" id="IPR023055">
    <property type="entry name" value="CinA_Arc"/>
</dbReference>
<dbReference type="InterPro" id="IPR036425">
    <property type="entry name" value="MoaB/Mog-like_dom_sf"/>
</dbReference>
<dbReference type="InterPro" id="IPR001453">
    <property type="entry name" value="MoaB/Mog_dom"/>
</dbReference>
<dbReference type="NCBIfam" id="TIGR00177">
    <property type="entry name" value="molyb_syn"/>
    <property type="match status" value="1"/>
</dbReference>
<dbReference type="NCBIfam" id="NF002291">
    <property type="entry name" value="PRK01215.1"/>
    <property type="match status" value="1"/>
</dbReference>
<dbReference type="PANTHER" id="PTHR13939">
    <property type="entry name" value="NICOTINAMIDE-NUCLEOTIDE AMIDOHYDROLASE PNCC"/>
    <property type="match status" value="1"/>
</dbReference>
<dbReference type="PANTHER" id="PTHR13939:SF0">
    <property type="entry name" value="NMN AMIDOHYDROLASE-LIKE PROTEIN YFAY"/>
    <property type="match status" value="1"/>
</dbReference>
<dbReference type="Pfam" id="PF00994">
    <property type="entry name" value="MoCF_biosynth"/>
    <property type="match status" value="1"/>
</dbReference>
<dbReference type="SMART" id="SM00852">
    <property type="entry name" value="MoCF_biosynth"/>
    <property type="match status" value="1"/>
</dbReference>
<dbReference type="SUPFAM" id="SSF53218">
    <property type="entry name" value="Molybdenum cofactor biosynthesis proteins"/>
    <property type="match status" value="1"/>
</dbReference>
<evidence type="ECO:0000255" key="1">
    <source>
        <dbReference type="HAMAP-Rule" id="MF_00226"/>
    </source>
</evidence>
<name>Y062_PYRCJ</name>
<feature type="chain" id="PRO_1000058722" description="Protein Pcal_0062">
    <location>
        <begin position="1"/>
        <end position="262"/>
    </location>
</feature>
<sequence>MPTAYIITVGNELLIGRVVNTNAAWLASKLTYLGYSVRRIVVVPDVEEDIVEAFREAMAKADVVISTGGLGPTPDDITNLAFCKALGAEPVVNEEALKMVREKYASRGYPMTEERVKMAMMPPGAVPLPNPVGTAPGILYETGGKIVVLLPGVPREMEAIFEGYVEPLLKSRGPPAHFSERVVTVRGVPEADVAPIIREVMRQNPRVYVKSHPKGLEVDAPLLQIHIYASAPTPQEAEGAVDAALKKLVELIKSKFSNAAIY</sequence>